<organism>
    <name type="scientific">Rhodococcus jostii (strain RHA1)</name>
    <dbReference type="NCBI Taxonomy" id="101510"/>
    <lineage>
        <taxon>Bacteria</taxon>
        <taxon>Bacillati</taxon>
        <taxon>Actinomycetota</taxon>
        <taxon>Actinomycetes</taxon>
        <taxon>Mycobacteriales</taxon>
        <taxon>Nocardiaceae</taxon>
        <taxon>Rhodococcus</taxon>
    </lineage>
</organism>
<gene>
    <name evidence="1" type="primary">tatA</name>
    <name type="ordered locus">RHA1_ro00837</name>
</gene>
<proteinExistence type="inferred from homology"/>
<name>TATA_RHOJR</name>
<dbReference type="EMBL" id="CP000431">
    <property type="protein sequence ID" value="ABG92670.1"/>
    <property type="molecule type" value="Genomic_DNA"/>
</dbReference>
<dbReference type="RefSeq" id="WP_005563470.1">
    <property type="nucleotide sequence ID" value="NC_008268.1"/>
</dbReference>
<dbReference type="SMR" id="Q0SIG6"/>
<dbReference type="KEGG" id="rha:RHA1_ro00837"/>
<dbReference type="eggNOG" id="COG1826">
    <property type="taxonomic scope" value="Bacteria"/>
</dbReference>
<dbReference type="HOGENOM" id="CLU_086034_4_2_11"/>
<dbReference type="OrthoDB" id="5245163at2"/>
<dbReference type="Proteomes" id="UP000008710">
    <property type="component" value="Chromosome"/>
</dbReference>
<dbReference type="GO" id="GO:0033281">
    <property type="term" value="C:TAT protein transport complex"/>
    <property type="evidence" value="ECO:0007669"/>
    <property type="project" value="UniProtKB-UniRule"/>
</dbReference>
<dbReference type="GO" id="GO:0008320">
    <property type="term" value="F:protein transmembrane transporter activity"/>
    <property type="evidence" value="ECO:0007669"/>
    <property type="project" value="UniProtKB-UniRule"/>
</dbReference>
<dbReference type="GO" id="GO:0043953">
    <property type="term" value="P:protein transport by the Tat complex"/>
    <property type="evidence" value="ECO:0007669"/>
    <property type="project" value="UniProtKB-UniRule"/>
</dbReference>
<dbReference type="Gene3D" id="1.20.5.3310">
    <property type="match status" value="1"/>
</dbReference>
<dbReference type="HAMAP" id="MF_00236">
    <property type="entry name" value="TatA_E"/>
    <property type="match status" value="1"/>
</dbReference>
<dbReference type="InterPro" id="IPR003369">
    <property type="entry name" value="TatA/B/E"/>
</dbReference>
<dbReference type="InterPro" id="IPR006312">
    <property type="entry name" value="TatA/E"/>
</dbReference>
<dbReference type="NCBIfam" id="NF001854">
    <property type="entry name" value="PRK00575.1"/>
    <property type="match status" value="1"/>
</dbReference>
<dbReference type="NCBIfam" id="TIGR01411">
    <property type="entry name" value="tatAE"/>
    <property type="match status" value="1"/>
</dbReference>
<dbReference type="PANTHER" id="PTHR42982">
    <property type="entry name" value="SEC-INDEPENDENT PROTEIN TRANSLOCASE PROTEIN TATA"/>
    <property type="match status" value="1"/>
</dbReference>
<dbReference type="PANTHER" id="PTHR42982:SF8">
    <property type="entry name" value="SEC-INDEPENDENT PROTEIN TRANSLOCASE PROTEIN TATA"/>
    <property type="match status" value="1"/>
</dbReference>
<dbReference type="Pfam" id="PF02416">
    <property type="entry name" value="TatA_B_E"/>
    <property type="match status" value="1"/>
</dbReference>
<sequence>MGAMSPWHWAIVALVVIILFGSKKLPDAARGLGRSLRIFKSEVKEMQNDNSTPAPTAQQSAPAELPVADTTTAPVTPPAPVQPQHTEPKSA</sequence>
<feature type="chain" id="PRO_1000044436" description="Sec-independent protein translocase protein TatA">
    <location>
        <begin position="1"/>
        <end position="91"/>
    </location>
</feature>
<feature type="transmembrane region" description="Helical" evidence="1">
    <location>
        <begin position="1"/>
        <end position="21"/>
    </location>
</feature>
<feature type="region of interest" description="Disordered" evidence="2">
    <location>
        <begin position="44"/>
        <end position="91"/>
    </location>
</feature>
<feature type="compositionally biased region" description="Low complexity" evidence="2">
    <location>
        <begin position="51"/>
        <end position="74"/>
    </location>
</feature>
<accession>Q0SIG6</accession>
<comment type="function">
    <text evidence="1">Part of the twin-arginine translocation (Tat) system that transports large folded proteins containing a characteristic twin-arginine motif in their signal peptide across membranes. TatA could form the protein-conducting channel of the Tat system.</text>
</comment>
<comment type="subunit">
    <text evidence="1">The Tat system comprises two distinct complexes: a TatABC complex, containing multiple copies of TatA, TatB and TatC subunits, and a separate TatA complex, containing only TatA subunits. Substrates initially bind to the TatABC complex, which probably triggers association of the separate TatA complex to form the active translocon.</text>
</comment>
<comment type="subcellular location">
    <subcellularLocation>
        <location evidence="1">Cell membrane</location>
        <topology evidence="1">Single-pass membrane protein</topology>
    </subcellularLocation>
</comment>
<comment type="similarity">
    <text evidence="1">Belongs to the TatA/E family.</text>
</comment>
<evidence type="ECO:0000255" key="1">
    <source>
        <dbReference type="HAMAP-Rule" id="MF_00236"/>
    </source>
</evidence>
<evidence type="ECO:0000256" key="2">
    <source>
        <dbReference type="SAM" id="MobiDB-lite"/>
    </source>
</evidence>
<reference key="1">
    <citation type="journal article" date="2006" name="Proc. Natl. Acad. Sci. U.S.A.">
        <title>The complete genome of Rhodococcus sp. RHA1 provides insights into a catabolic powerhouse.</title>
        <authorList>
            <person name="McLeod M.P."/>
            <person name="Warren R.L."/>
            <person name="Hsiao W.W.L."/>
            <person name="Araki N."/>
            <person name="Myhre M."/>
            <person name="Fernandes C."/>
            <person name="Miyazawa D."/>
            <person name="Wong W."/>
            <person name="Lillquist A.L."/>
            <person name="Wang D."/>
            <person name="Dosanjh M."/>
            <person name="Hara H."/>
            <person name="Petrescu A."/>
            <person name="Morin R.D."/>
            <person name="Yang G."/>
            <person name="Stott J.M."/>
            <person name="Schein J.E."/>
            <person name="Shin H."/>
            <person name="Smailus D."/>
            <person name="Siddiqui A.S."/>
            <person name="Marra M.A."/>
            <person name="Jones S.J.M."/>
            <person name="Holt R."/>
            <person name="Brinkman F.S.L."/>
            <person name="Miyauchi K."/>
            <person name="Fukuda M."/>
            <person name="Davies J.E."/>
            <person name="Mohn W.W."/>
            <person name="Eltis L.D."/>
        </authorList>
    </citation>
    <scope>NUCLEOTIDE SEQUENCE [LARGE SCALE GENOMIC DNA]</scope>
    <source>
        <strain>RHA1</strain>
    </source>
</reference>
<keyword id="KW-1003">Cell membrane</keyword>
<keyword id="KW-0472">Membrane</keyword>
<keyword id="KW-0653">Protein transport</keyword>
<keyword id="KW-0811">Translocation</keyword>
<keyword id="KW-0812">Transmembrane</keyword>
<keyword id="KW-1133">Transmembrane helix</keyword>
<keyword id="KW-0813">Transport</keyword>
<protein>
    <recommendedName>
        <fullName evidence="1">Sec-independent protein translocase protein TatA</fullName>
    </recommendedName>
</protein>